<keyword id="KW-0488">Methylation</keyword>
<keyword id="KW-1185">Reference proteome</keyword>
<keyword id="KW-0687">Ribonucleoprotein</keyword>
<keyword id="KW-0689">Ribosomal protein</keyword>
<keyword id="KW-0694">RNA-binding</keyword>
<keyword id="KW-0699">rRNA-binding</keyword>
<organism>
    <name type="scientific">Opitutus terrae (strain DSM 11246 / JCM 15787 / PB90-1)</name>
    <dbReference type="NCBI Taxonomy" id="452637"/>
    <lineage>
        <taxon>Bacteria</taxon>
        <taxon>Pseudomonadati</taxon>
        <taxon>Verrucomicrobiota</taxon>
        <taxon>Opitutia</taxon>
        <taxon>Opitutales</taxon>
        <taxon>Opitutaceae</taxon>
        <taxon>Opitutus</taxon>
    </lineage>
</organism>
<protein>
    <recommendedName>
        <fullName evidence="1">Large ribosomal subunit protein uL11</fullName>
    </recommendedName>
    <alternativeName>
        <fullName evidence="2">50S ribosomal protein L11</fullName>
    </alternativeName>
</protein>
<name>RL11_OPITP</name>
<accession>B1ZPC2</accession>
<gene>
    <name evidence="1" type="primary">rplK</name>
    <name type="ordered locus">Oter_0236</name>
</gene>
<proteinExistence type="inferred from homology"/>
<evidence type="ECO:0000255" key="1">
    <source>
        <dbReference type="HAMAP-Rule" id="MF_00736"/>
    </source>
</evidence>
<evidence type="ECO:0000305" key="2"/>
<sequence length="141" mass="14953">MAKKIQGYIRLQLPAGAANPAPPVGPALGAQGVNIMAFCKDFNARTKDQNGMILPVVITVYTDKSFTFILKSPPASVLLKKAANIATGSGKPNQDRVGKVTKKQCAEIWKLKKADMNAKDEAAGIKTIAGTARQMGIEVVD</sequence>
<comment type="function">
    <text evidence="1">Forms part of the ribosomal stalk which helps the ribosome interact with GTP-bound translation factors.</text>
</comment>
<comment type="subunit">
    <text evidence="1">Part of the ribosomal stalk of the 50S ribosomal subunit. Interacts with L10 and the large rRNA to form the base of the stalk. L10 forms an elongated spine to which L12 dimers bind in a sequential fashion forming a multimeric L10(L12)X complex.</text>
</comment>
<comment type="PTM">
    <text evidence="1">One or more lysine residues are methylated.</text>
</comment>
<comment type="similarity">
    <text evidence="1">Belongs to the universal ribosomal protein uL11 family.</text>
</comment>
<dbReference type="EMBL" id="CP001032">
    <property type="protein sequence ID" value="ACB73527.1"/>
    <property type="molecule type" value="Genomic_DNA"/>
</dbReference>
<dbReference type="RefSeq" id="WP_012373065.1">
    <property type="nucleotide sequence ID" value="NC_010571.1"/>
</dbReference>
<dbReference type="SMR" id="B1ZPC2"/>
<dbReference type="STRING" id="452637.Oter_0236"/>
<dbReference type="KEGG" id="ote:Oter_0236"/>
<dbReference type="eggNOG" id="COG0080">
    <property type="taxonomic scope" value="Bacteria"/>
</dbReference>
<dbReference type="HOGENOM" id="CLU_074237_2_1_0"/>
<dbReference type="OrthoDB" id="9802408at2"/>
<dbReference type="Proteomes" id="UP000007013">
    <property type="component" value="Chromosome"/>
</dbReference>
<dbReference type="GO" id="GO:0022625">
    <property type="term" value="C:cytosolic large ribosomal subunit"/>
    <property type="evidence" value="ECO:0007669"/>
    <property type="project" value="TreeGrafter"/>
</dbReference>
<dbReference type="GO" id="GO:0070180">
    <property type="term" value="F:large ribosomal subunit rRNA binding"/>
    <property type="evidence" value="ECO:0007669"/>
    <property type="project" value="UniProtKB-UniRule"/>
</dbReference>
<dbReference type="GO" id="GO:0003735">
    <property type="term" value="F:structural constituent of ribosome"/>
    <property type="evidence" value="ECO:0007669"/>
    <property type="project" value="InterPro"/>
</dbReference>
<dbReference type="GO" id="GO:0006412">
    <property type="term" value="P:translation"/>
    <property type="evidence" value="ECO:0007669"/>
    <property type="project" value="UniProtKB-UniRule"/>
</dbReference>
<dbReference type="CDD" id="cd00349">
    <property type="entry name" value="Ribosomal_L11"/>
    <property type="match status" value="1"/>
</dbReference>
<dbReference type="FunFam" id="1.10.10.250:FF:000001">
    <property type="entry name" value="50S ribosomal protein L11"/>
    <property type="match status" value="1"/>
</dbReference>
<dbReference type="FunFam" id="3.30.1550.10:FF:000001">
    <property type="entry name" value="50S ribosomal protein L11"/>
    <property type="match status" value="1"/>
</dbReference>
<dbReference type="Gene3D" id="1.10.10.250">
    <property type="entry name" value="Ribosomal protein L11, C-terminal domain"/>
    <property type="match status" value="1"/>
</dbReference>
<dbReference type="Gene3D" id="3.30.1550.10">
    <property type="entry name" value="Ribosomal protein L11/L12, N-terminal domain"/>
    <property type="match status" value="1"/>
</dbReference>
<dbReference type="HAMAP" id="MF_00736">
    <property type="entry name" value="Ribosomal_uL11"/>
    <property type="match status" value="1"/>
</dbReference>
<dbReference type="InterPro" id="IPR000911">
    <property type="entry name" value="Ribosomal_uL11"/>
</dbReference>
<dbReference type="InterPro" id="IPR006519">
    <property type="entry name" value="Ribosomal_uL11_bac-typ"/>
</dbReference>
<dbReference type="InterPro" id="IPR020783">
    <property type="entry name" value="Ribosomal_uL11_C"/>
</dbReference>
<dbReference type="InterPro" id="IPR036769">
    <property type="entry name" value="Ribosomal_uL11_C_sf"/>
</dbReference>
<dbReference type="InterPro" id="IPR020785">
    <property type="entry name" value="Ribosomal_uL11_CS"/>
</dbReference>
<dbReference type="InterPro" id="IPR020784">
    <property type="entry name" value="Ribosomal_uL11_N"/>
</dbReference>
<dbReference type="InterPro" id="IPR036796">
    <property type="entry name" value="Ribosomal_uL11_N_sf"/>
</dbReference>
<dbReference type="NCBIfam" id="TIGR01632">
    <property type="entry name" value="L11_bact"/>
    <property type="match status" value="1"/>
</dbReference>
<dbReference type="PANTHER" id="PTHR11661">
    <property type="entry name" value="60S RIBOSOMAL PROTEIN L12"/>
    <property type="match status" value="1"/>
</dbReference>
<dbReference type="PANTHER" id="PTHR11661:SF1">
    <property type="entry name" value="LARGE RIBOSOMAL SUBUNIT PROTEIN UL11M"/>
    <property type="match status" value="1"/>
</dbReference>
<dbReference type="Pfam" id="PF00298">
    <property type="entry name" value="Ribosomal_L11"/>
    <property type="match status" value="1"/>
</dbReference>
<dbReference type="Pfam" id="PF03946">
    <property type="entry name" value="Ribosomal_L11_N"/>
    <property type="match status" value="1"/>
</dbReference>
<dbReference type="SMART" id="SM00649">
    <property type="entry name" value="RL11"/>
    <property type="match status" value="1"/>
</dbReference>
<dbReference type="SUPFAM" id="SSF54747">
    <property type="entry name" value="Ribosomal L11/L12e N-terminal domain"/>
    <property type="match status" value="1"/>
</dbReference>
<dbReference type="SUPFAM" id="SSF46906">
    <property type="entry name" value="Ribosomal protein L11, C-terminal domain"/>
    <property type="match status" value="1"/>
</dbReference>
<dbReference type="PROSITE" id="PS00359">
    <property type="entry name" value="RIBOSOMAL_L11"/>
    <property type="match status" value="1"/>
</dbReference>
<feature type="chain" id="PRO_1000195683" description="Large ribosomal subunit protein uL11">
    <location>
        <begin position="1"/>
        <end position="141"/>
    </location>
</feature>
<reference key="1">
    <citation type="journal article" date="2011" name="J. Bacteriol.">
        <title>Genome sequence of the verrucomicrobium Opitutus terrae PB90-1, an abundant inhabitant of rice paddy soil ecosystems.</title>
        <authorList>
            <person name="van Passel M.W."/>
            <person name="Kant R."/>
            <person name="Palva A."/>
            <person name="Copeland A."/>
            <person name="Lucas S."/>
            <person name="Lapidus A."/>
            <person name="Glavina del Rio T."/>
            <person name="Pitluck S."/>
            <person name="Goltsman E."/>
            <person name="Clum A."/>
            <person name="Sun H."/>
            <person name="Schmutz J."/>
            <person name="Larimer F.W."/>
            <person name="Land M.L."/>
            <person name="Hauser L."/>
            <person name="Kyrpides N."/>
            <person name="Mikhailova N."/>
            <person name="Richardson P.P."/>
            <person name="Janssen P.H."/>
            <person name="de Vos W.M."/>
            <person name="Smidt H."/>
        </authorList>
    </citation>
    <scope>NUCLEOTIDE SEQUENCE [LARGE SCALE GENOMIC DNA]</scope>
    <source>
        <strain>DSM 11246 / JCM 15787 / PB90-1</strain>
    </source>
</reference>